<reference evidence="9 11" key="1">
    <citation type="journal article" date="2004" name="Nat. Genet.">
        <title>Complete sequencing and characterization of 21,243 full-length human cDNAs.</title>
        <authorList>
            <person name="Ota T."/>
            <person name="Suzuki Y."/>
            <person name="Nishikawa T."/>
            <person name="Otsuki T."/>
            <person name="Sugiyama T."/>
            <person name="Irie R."/>
            <person name="Wakamatsu A."/>
            <person name="Hayashi K."/>
            <person name="Sato H."/>
            <person name="Nagai K."/>
            <person name="Kimura K."/>
            <person name="Makita H."/>
            <person name="Sekine M."/>
            <person name="Obayashi M."/>
            <person name="Nishi T."/>
            <person name="Shibahara T."/>
            <person name="Tanaka T."/>
            <person name="Ishii S."/>
            <person name="Yamamoto J."/>
            <person name="Saito K."/>
            <person name="Kawai Y."/>
            <person name="Isono Y."/>
            <person name="Nakamura Y."/>
            <person name="Nagahari K."/>
            <person name="Murakami K."/>
            <person name="Yasuda T."/>
            <person name="Iwayanagi T."/>
            <person name="Wagatsuma M."/>
            <person name="Shiratori A."/>
            <person name="Sudo H."/>
            <person name="Hosoiri T."/>
            <person name="Kaku Y."/>
            <person name="Kodaira H."/>
            <person name="Kondo H."/>
            <person name="Sugawara M."/>
            <person name="Takahashi M."/>
            <person name="Kanda K."/>
            <person name="Yokoi T."/>
            <person name="Furuya T."/>
            <person name="Kikkawa E."/>
            <person name="Omura Y."/>
            <person name="Abe K."/>
            <person name="Kamihara K."/>
            <person name="Katsuta N."/>
            <person name="Sato K."/>
            <person name="Tanikawa M."/>
            <person name="Yamazaki M."/>
            <person name="Ninomiya K."/>
            <person name="Ishibashi T."/>
            <person name="Yamashita H."/>
            <person name="Murakawa K."/>
            <person name="Fujimori K."/>
            <person name="Tanai H."/>
            <person name="Kimata M."/>
            <person name="Watanabe M."/>
            <person name="Hiraoka S."/>
            <person name="Chiba Y."/>
            <person name="Ishida S."/>
            <person name="Ono Y."/>
            <person name="Takiguchi S."/>
            <person name="Watanabe S."/>
            <person name="Yosida M."/>
            <person name="Hotuta T."/>
            <person name="Kusano J."/>
            <person name="Kanehori K."/>
            <person name="Takahashi-Fujii A."/>
            <person name="Hara H."/>
            <person name="Tanase T.-O."/>
            <person name="Nomura Y."/>
            <person name="Togiya S."/>
            <person name="Komai F."/>
            <person name="Hara R."/>
            <person name="Takeuchi K."/>
            <person name="Arita M."/>
            <person name="Imose N."/>
            <person name="Musashino K."/>
            <person name="Yuuki H."/>
            <person name="Oshima A."/>
            <person name="Sasaki N."/>
            <person name="Aotsuka S."/>
            <person name="Yoshikawa Y."/>
            <person name="Matsunawa H."/>
            <person name="Ichihara T."/>
            <person name="Shiohata N."/>
            <person name="Sano S."/>
            <person name="Moriya S."/>
            <person name="Momiyama H."/>
            <person name="Satoh N."/>
            <person name="Takami S."/>
            <person name="Terashima Y."/>
            <person name="Suzuki O."/>
            <person name="Nakagawa S."/>
            <person name="Senoh A."/>
            <person name="Mizoguchi H."/>
            <person name="Goto Y."/>
            <person name="Shimizu F."/>
            <person name="Wakebe H."/>
            <person name="Hishigaki H."/>
            <person name="Watanabe T."/>
            <person name="Sugiyama A."/>
            <person name="Takemoto M."/>
            <person name="Kawakami B."/>
            <person name="Yamazaki M."/>
            <person name="Watanabe K."/>
            <person name="Kumagai A."/>
            <person name="Itakura S."/>
            <person name="Fukuzumi Y."/>
            <person name="Fujimori Y."/>
            <person name="Komiyama M."/>
            <person name="Tashiro H."/>
            <person name="Tanigami A."/>
            <person name="Fujiwara T."/>
            <person name="Ono T."/>
            <person name="Yamada K."/>
            <person name="Fujii Y."/>
            <person name="Ozaki K."/>
            <person name="Hirao M."/>
            <person name="Ohmori Y."/>
            <person name="Kawabata A."/>
            <person name="Hikiji T."/>
            <person name="Kobatake N."/>
            <person name="Inagaki H."/>
            <person name="Ikema Y."/>
            <person name="Okamoto S."/>
            <person name="Okitani R."/>
            <person name="Kawakami T."/>
            <person name="Noguchi S."/>
            <person name="Itoh T."/>
            <person name="Shigeta K."/>
            <person name="Senba T."/>
            <person name="Matsumura K."/>
            <person name="Nakajima Y."/>
            <person name="Mizuno T."/>
            <person name="Morinaga M."/>
            <person name="Sasaki M."/>
            <person name="Togashi T."/>
            <person name="Oyama M."/>
            <person name="Hata H."/>
            <person name="Watanabe M."/>
            <person name="Komatsu T."/>
            <person name="Mizushima-Sugano J."/>
            <person name="Satoh T."/>
            <person name="Shirai Y."/>
            <person name="Takahashi Y."/>
            <person name="Nakagawa K."/>
            <person name="Okumura K."/>
            <person name="Nagase T."/>
            <person name="Nomura N."/>
            <person name="Kikuchi H."/>
            <person name="Masuho Y."/>
            <person name="Yamashita R."/>
            <person name="Nakai K."/>
            <person name="Yada T."/>
            <person name="Nakamura Y."/>
            <person name="Ohara O."/>
            <person name="Isogai T."/>
            <person name="Sugano S."/>
        </authorList>
    </citation>
    <scope>NUCLEOTIDE SEQUENCE [LARGE SCALE MRNA] (ISOFORM 1)</scope>
    <scope>NUCLEOTIDE SEQUENCE [LARGE SCALE MRNA] OF 135-408 (ISOFORM 2)</scope>
    <source>
        <tissue>Cerebellum</tissue>
        <tissue evidence="11">Teratocarcinoma</tissue>
    </source>
</reference>
<reference key="2">
    <citation type="journal article" date="2007" name="BMC Genomics">
        <title>The full-ORF clone resource of the German cDNA consortium.</title>
        <authorList>
            <person name="Bechtel S."/>
            <person name="Rosenfelder H."/>
            <person name="Duda A."/>
            <person name="Schmidt C.P."/>
            <person name="Ernst U."/>
            <person name="Wellenreuther R."/>
            <person name="Mehrle A."/>
            <person name="Schuster C."/>
            <person name="Bahr A."/>
            <person name="Bloecker H."/>
            <person name="Heubner D."/>
            <person name="Hoerlein A."/>
            <person name="Michel G."/>
            <person name="Wedler H."/>
            <person name="Koehrer K."/>
            <person name="Ottenwaelder B."/>
            <person name="Poustka A."/>
            <person name="Wiemann S."/>
            <person name="Schupp I."/>
        </authorList>
    </citation>
    <scope>NUCLEOTIDE SEQUENCE [LARGE SCALE MRNA] (ISOFORM 2)</scope>
    <source>
        <tissue>Heart</tissue>
    </source>
</reference>
<reference evidence="9 12" key="3">
    <citation type="submission" date="2005-09" db="EMBL/GenBank/DDBJ databases">
        <authorList>
            <person name="Mural R.J."/>
            <person name="Istrail S."/>
            <person name="Sutton G.G."/>
            <person name="Florea L."/>
            <person name="Halpern A.L."/>
            <person name="Mobarry C.M."/>
            <person name="Lippert R."/>
            <person name="Walenz B."/>
            <person name="Shatkay H."/>
            <person name="Dew I."/>
            <person name="Miller J.R."/>
            <person name="Flanigan M.J."/>
            <person name="Edwards N.J."/>
            <person name="Bolanos R."/>
            <person name="Fasulo D."/>
            <person name="Halldorsson B.V."/>
            <person name="Hannenhalli S."/>
            <person name="Turner R."/>
            <person name="Yooseph S."/>
            <person name="Lu F."/>
            <person name="Nusskern D.R."/>
            <person name="Shue B.C."/>
            <person name="Zheng X.H."/>
            <person name="Zhong F."/>
            <person name="Delcher A.L."/>
            <person name="Huson D.H."/>
            <person name="Kravitz S.A."/>
            <person name="Mouchard L."/>
            <person name="Reinert K."/>
            <person name="Remington K.A."/>
            <person name="Clark A.G."/>
            <person name="Waterman M.S."/>
            <person name="Eichler E.E."/>
            <person name="Adams M.D."/>
            <person name="Hunkapiller M.W."/>
            <person name="Myers E.W."/>
            <person name="Venter J.C."/>
        </authorList>
    </citation>
    <scope>NUCLEOTIDE SEQUENCE [LARGE SCALE GENOMIC DNA]</scope>
</reference>
<reference evidence="9 10" key="4">
    <citation type="journal article" date="2004" name="Genome Res.">
        <title>The status, quality, and expansion of the NIH full-length cDNA project: the Mammalian Gene Collection (MGC).</title>
        <authorList>
            <consortium name="The MGC Project Team"/>
        </authorList>
    </citation>
    <scope>NUCLEOTIDE SEQUENCE [LARGE SCALE MRNA] (ISOFORM 1)</scope>
    <source>
        <tissue evidence="10">Pancreas</tissue>
    </source>
</reference>
<reference evidence="9" key="5">
    <citation type="journal article" date="2005" name="Am. J. Pathol.">
        <title>Expression of S100P and its novel binding partner S100PBPR in early pancreatic cancer.</title>
        <authorList>
            <person name="Dowen S.E."/>
            <person name="Crnogorac-Jurcevic T."/>
            <person name="Gangeswaran R."/>
            <person name="Hansen M."/>
            <person name="Eloranta J.J."/>
            <person name="Bhakta V."/>
            <person name="Brentnall T.A."/>
            <person name="Luettges J."/>
            <person name="Kloeppel G."/>
            <person name="Lemoine N.R."/>
        </authorList>
    </citation>
    <scope>INTERACTION WITH S100P</scope>
    <scope>SUBCELLULAR LOCATION</scope>
    <scope>TISSUE SPECIFICITY</scope>
</reference>
<reference key="6">
    <citation type="journal article" date="2008" name="Am. J. Clin. Pathol.">
        <title>Usefulness of S100P in diagnosis of adenocarcinoma of pancreas on fine-needle aspiration biopsy specimens.</title>
        <authorList>
            <person name="Deng H."/>
            <person name="Shi J."/>
            <person name="Wilkerson M."/>
            <person name="Meschter S."/>
            <person name="Dupree W."/>
            <person name="Lin F."/>
        </authorList>
    </citation>
    <scope>TISSUE SPECIFICITY</scope>
</reference>
<reference key="7">
    <citation type="journal article" date="2013" name="J. Proteome Res.">
        <title>Toward a comprehensive characterization of a human cancer cell phosphoproteome.</title>
        <authorList>
            <person name="Zhou H."/>
            <person name="Di Palma S."/>
            <person name="Preisinger C."/>
            <person name="Peng M."/>
            <person name="Polat A.N."/>
            <person name="Heck A.J."/>
            <person name="Mohammed S."/>
        </authorList>
    </citation>
    <scope>PHOSPHORYLATION [LARGE SCALE ANALYSIS] AT SER-187</scope>
    <scope>IDENTIFICATION BY MASS SPECTROMETRY [LARGE SCALE ANALYSIS]</scope>
    <source>
        <tissue>Erythroleukemia</tissue>
    </source>
</reference>
<comment type="subunit">
    <text evidence="4">Interacts with S100P.</text>
</comment>
<comment type="interaction">
    <interactant intactId="EBI-18959794">
        <id>Q96BU1</id>
    </interactant>
    <interactant intactId="EBI-355720">
        <id>O43809</id>
        <label>NUDT21</label>
    </interactant>
    <organismsDiffer>false</organismsDiffer>
    <experiments>3</experiments>
</comment>
<comment type="interaction">
    <interactant intactId="EBI-18959794">
        <id>Q96BU1</id>
    </interactant>
    <interactant intactId="EBI-1222622">
        <id>Q96HM7</id>
        <label>PCED1B</label>
    </interactant>
    <organismsDiffer>false</organismsDiffer>
    <experiments>2</experiments>
</comment>
<comment type="subcellular location">
    <subcellularLocation>
        <location evidence="4">Nucleus</location>
    </subcellularLocation>
    <text evidence="4">Colocalizes with S100P in the nucleus.</text>
</comment>
<comment type="alternative products">
    <event type="alternative splicing"/>
    <isoform>
        <id>Q96BU1-1</id>
        <name evidence="3">1</name>
        <sequence type="displayed"/>
    </isoform>
    <isoform>
        <id>Q96BU1-2</id>
        <name evidence="2">2</name>
        <sequence type="described" ref="VSP_052661"/>
    </isoform>
</comment>
<comment type="tissue specificity">
    <text evidence="4 5">Expressed in brain, spleen, and lung. Not detected in pancreas or liver. In pancreas, expressed predominantly in islet cells and to a lesser extent in acinar cells, but not expressed in ductal cells. Up-regulated in various pancreatic ductal adenocarcinomas and pancreatic intraepithelial neoplasias. Detected in pancreatic ductal adenocarcinoma cells (at protein level). Not detected in non-neoplastic ductal epithelium (at protein level).</text>
</comment>
<comment type="sequence caution" evidence="9">
    <conflict type="erroneous initiation">
        <sequence resource="EMBL-CDS" id="BAB14335"/>
    </conflict>
</comment>
<comment type="online information" name="Atlas of Genetics and Cytogenetics in Oncology and Haematology">
    <link uri="https://atlasgeneticsoncology.org/gene/44308/S100PBP"/>
</comment>
<protein>
    <recommendedName>
        <fullName>S100P-binding protein</fullName>
    </recommendedName>
    <alternativeName>
        <fullName>S100P-binding protein Riken</fullName>
    </alternativeName>
</protein>
<evidence type="ECO:0000256" key="1">
    <source>
        <dbReference type="SAM" id="MobiDB-lite"/>
    </source>
</evidence>
<evidence type="ECO:0000269" key="2">
    <source>
    </source>
</evidence>
<evidence type="ECO:0000269" key="3">
    <source>
    </source>
</evidence>
<evidence type="ECO:0000269" key="4">
    <source>
    </source>
</evidence>
<evidence type="ECO:0000269" key="5">
    <source>
    </source>
</evidence>
<evidence type="ECO:0000303" key="6">
    <source>
    </source>
</evidence>
<evidence type="ECO:0000303" key="7">
    <source>
    </source>
</evidence>
<evidence type="ECO:0000303" key="8">
    <source>
    </source>
</evidence>
<evidence type="ECO:0000305" key="9"/>
<evidence type="ECO:0000312" key="10">
    <source>
        <dbReference type="EMBL" id="AAH15175.1"/>
    </source>
</evidence>
<evidence type="ECO:0000312" key="11">
    <source>
        <dbReference type="EMBL" id="BAB14335.1"/>
    </source>
</evidence>
<evidence type="ECO:0000312" key="12">
    <source>
        <dbReference type="EMBL" id="CAI46038.1"/>
    </source>
</evidence>
<evidence type="ECO:0007744" key="13">
    <source>
    </source>
</evidence>
<accession>Q96BU1</accession>
<accession>B3KR04</accession>
<accession>D3DPQ5</accession>
<accession>Q5HYH3</accession>
<accession>Q9H997</accession>
<dbReference type="EMBL" id="AK022965">
    <property type="protein sequence ID" value="BAB14335.1"/>
    <property type="status" value="ALT_INIT"/>
    <property type="molecule type" value="mRNA"/>
</dbReference>
<dbReference type="EMBL" id="AK090711">
    <property type="protein sequence ID" value="BAG52216.1"/>
    <property type="molecule type" value="mRNA"/>
</dbReference>
<dbReference type="EMBL" id="BX647667">
    <property type="protein sequence ID" value="CAI46038.1"/>
    <property type="molecule type" value="mRNA"/>
</dbReference>
<dbReference type="EMBL" id="CH471059">
    <property type="protein sequence ID" value="EAX07503.1"/>
    <property type="molecule type" value="Genomic_DNA"/>
</dbReference>
<dbReference type="EMBL" id="CH471059">
    <property type="protein sequence ID" value="EAX07504.1"/>
    <property type="molecule type" value="Genomic_DNA"/>
</dbReference>
<dbReference type="EMBL" id="CH471059">
    <property type="protein sequence ID" value="EAX07505.1"/>
    <property type="molecule type" value="Genomic_DNA"/>
</dbReference>
<dbReference type="EMBL" id="BC015175">
    <property type="protein sequence ID" value="AAH15175.1"/>
    <property type="molecule type" value="mRNA"/>
</dbReference>
<dbReference type="CCDS" id="CCDS30666.1">
    <molecule id="Q96BU1-1"/>
</dbReference>
<dbReference type="RefSeq" id="NP_001243050.1">
    <molecule id="Q96BU1-1"/>
    <property type="nucleotide sequence ID" value="NM_001256121.2"/>
</dbReference>
<dbReference type="RefSeq" id="NP_073590.2">
    <molecule id="Q96BU1-1"/>
    <property type="nucleotide sequence ID" value="NM_022753.4"/>
</dbReference>
<dbReference type="RefSeq" id="XP_011540263.1">
    <molecule id="Q96BU1-1"/>
    <property type="nucleotide sequence ID" value="XM_011541961.3"/>
</dbReference>
<dbReference type="RefSeq" id="XP_011540264.1">
    <molecule id="Q96BU1-1"/>
    <property type="nucleotide sequence ID" value="XM_011541962.3"/>
</dbReference>
<dbReference type="RefSeq" id="XP_024304944.1">
    <molecule id="Q96BU1-1"/>
    <property type="nucleotide sequence ID" value="XM_024449176.2"/>
</dbReference>
<dbReference type="RefSeq" id="XP_024304945.1">
    <molecule id="Q96BU1-1"/>
    <property type="nucleotide sequence ID" value="XM_024449177.2"/>
</dbReference>
<dbReference type="RefSeq" id="XP_047283979.1">
    <molecule id="Q96BU1-1"/>
    <property type="nucleotide sequence ID" value="XM_047428023.1"/>
</dbReference>
<dbReference type="RefSeq" id="XP_047283980.1">
    <molecule id="Q96BU1-1"/>
    <property type="nucleotide sequence ID" value="XM_047428024.1"/>
</dbReference>
<dbReference type="RefSeq" id="XP_047283985.1">
    <molecule id="Q96BU1-1"/>
    <property type="nucleotide sequence ID" value="XM_047428029.1"/>
</dbReference>
<dbReference type="RefSeq" id="XP_047283994.1">
    <molecule id="Q96BU1-2"/>
    <property type="nucleotide sequence ID" value="XM_047428038.1"/>
</dbReference>
<dbReference type="RefSeq" id="XP_054194259.1">
    <molecule id="Q96BU1-1"/>
    <property type="nucleotide sequence ID" value="XM_054338284.1"/>
</dbReference>
<dbReference type="RefSeq" id="XP_054194260.1">
    <molecule id="Q96BU1-1"/>
    <property type="nucleotide sequence ID" value="XM_054338285.1"/>
</dbReference>
<dbReference type="RefSeq" id="XP_054194261.1">
    <molecule id="Q96BU1-1"/>
    <property type="nucleotide sequence ID" value="XM_054338286.1"/>
</dbReference>
<dbReference type="RefSeq" id="XP_054194262.1">
    <molecule id="Q96BU1-1"/>
    <property type="nucleotide sequence ID" value="XM_054338287.1"/>
</dbReference>
<dbReference type="RefSeq" id="XP_054194263.1">
    <molecule id="Q96BU1-1"/>
    <property type="nucleotide sequence ID" value="XM_054338288.1"/>
</dbReference>
<dbReference type="RefSeq" id="XP_054194269.1">
    <molecule id="Q96BU1-2"/>
    <property type="nucleotide sequence ID" value="XM_054338294.1"/>
</dbReference>
<dbReference type="RefSeq" id="XP_054194271.1">
    <molecule id="Q96BU1-1"/>
    <property type="nucleotide sequence ID" value="XM_054338296.1"/>
</dbReference>
<dbReference type="BioGRID" id="122278">
    <property type="interactions" value="10"/>
</dbReference>
<dbReference type="FunCoup" id="Q96BU1">
    <property type="interactions" value="3088"/>
</dbReference>
<dbReference type="IntAct" id="Q96BU1">
    <property type="interactions" value="3"/>
</dbReference>
<dbReference type="STRING" id="9606.ENSP00000362574"/>
<dbReference type="CarbonylDB" id="Q96BU1"/>
<dbReference type="GlyGen" id="Q96BU1">
    <property type="glycosylation" value="1 site, 1 O-linked glycan (1 site)"/>
</dbReference>
<dbReference type="iPTMnet" id="Q96BU1"/>
<dbReference type="PhosphoSitePlus" id="Q96BU1"/>
<dbReference type="BioMuta" id="S100PBP"/>
<dbReference type="DMDM" id="74731274"/>
<dbReference type="jPOST" id="Q96BU1"/>
<dbReference type="MassIVE" id="Q96BU1"/>
<dbReference type="PaxDb" id="9606-ENSP00000362574"/>
<dbReference type="PeptideAtlas" id="Q96BU1"/>
<dbReference type="ProteomicsDB" id="76116">
    <molecule id="Q96BU1-1"/>
</dbReference>
<dbReference type="ProteomicsDB" id="76117">
    <molecule id="Q96BU1-2"/>
</dbReference>
<dbReference type="Pumba" id="Q96BU1"/>
<dbReference type="Antibodypedia" id="31365">
    <property type="antibodies" value="109 antibodies from 19 providers"/>
</dbReference>
<dbReference type="DNASU" id="64766"/>
<dbReference type="Ensembl" id="ENST00000373475.10">
    <molecule id="Q96BU1-1"/>
    <property type="protein sequence ID" value="ENSP00000362574.5"/>
    <property type="gene ID" value="ENSG00000116497.18"/>
</dbReference>
<dbReference type="Ensembl" id="ENST00000373476.5">
    <molecule id="Q96BU1-1"/>
    <property type="protein sequence ID" value="ENSP00000362575.1"/>
    <property type="gene ID" value="ENSG00000116497.18"/>
</dbReference>
<dbReference type="GeneID" id="64766"/>
<dbReference type="KEGG" id="hsa:64766"/>
<dbReference type="MANE-Select" id="ENST00000373475.10">
    <property type="protein sequence ID" value="ENSP00000362574.5"/>
    <property type="RefSeq nucleotide sequence ID" value="NM_022753.4"/>
    <property type="RefSeq protein sequence ID" value="NP_073590.2"/>
</dbReference>
<dbReference type="UCSC" id="uc001bvz.5">
    <molecule id="Q96BU1-1"/>
    <property type="organism name" value="human"/>
</dbReference>
<dbReference type="AGR" id="HGNC:25768"/>
<dbReference type="CTD" id="64766"/>
<dbReference type="DisGeNET" id="64766"/>
<dbReference type="GeneCards" id="S100PBP"/>
<dbReference type="HGNC" id="HGNC:25768">
    <property type="gene designation" value="S100PBP"/>
</dbReference>
<dbReference type="HPA" id="ENSG00000116497">
    <property type="expression patterns" value="Low tissue specificity"/>
</dbReference>
<dbReference type="MIM" id="611889">
    <property type="type" value="gene"/>
</dbReference>
<dbReference type="neXtProt" id="NX_Q96BU1"/>
<dbReference type="OpenTargets" id="ENSG00000116497"/>
<dbReference type="PharmGKB" id="PA142670958"/>
<dbReference type="VEuPathDB" id="HostDB:ENSG00000116497"/>
<dbReference type="eggNOG" id="ENOG502S5YT">
    <property type="taxonomic scope" value="Eukaryota"/>
</dbReference>
<dbReference type="GeneTree" id="ENSGT00390000007209"/>
<dbReference type="HOGENOM" id="CLU_064425_0_0_1"/>
<dbReference type="InParanoid" id="Q96BU1"/>
<dbReference type="OMA" id="HHMQNSK"/>
<dbReference type="OrthoDB" id="8945510at2759"/>
<dbReference type="PAN-GO" id="Q96BU1">
    <property type="GO annotations" value="3 GO annotations based on evolutionary models"/>
</dbReference>
<dbReference type="PhylomeDB" id="Q96BU1"/>
<dbReference type="TreeFam" id="TF337946"/>
<dbReference type="PathwayCommons" id="Q96BU1"/>
<dbReference type="SignaLink" id="Q96BU1"/>
<dbReference type="BioGRID-ORCS" id="64766">
    <property type="hits" value="13 hits in 1157 CRISPR screens"/>
</dbReference>
<dbReference type="ChiTaRS" id="S100PBP">
    <property type="organism name" value="human"/>
</dbReference>
<dbReference type="GenomeRNAi" id="64766"/>
<dbReference type="Pharos" id="Q96BU1">
    <property type="development level" value="Tbio"/>
</dbReference>
<dbReference type="PRO" id="PR:Q96BU1"/>
<dbReference type="Proteomes" id="UP000005640">
    <property type="component" value="Chromosome 1"/>
</dbReference>
<dbReference type="RNAct" id="Q96BU1">
    <property type="molecule type" value="protein"/>
</dbReference>
<dbReference type="Bgee" id="ENSG00000116497">
    <property type="expression patterns" value="Expressed in right testis and 183 other cell types or tissues"/>
</dbReference>
<dbReference type="ExpressionAtlas" id="Q96BU1">
    <property type="expression patterns" value="baseline and differential"/>
</dbReference>
<dbReference type="GO" id="GO:0005829">
    <property type="term" value="C:cytosol"/>
    <property type="evidence" value="ECO:0000314"/>
    <property type="project" value="HPA"/>
</dbReference>
<dbReference type="GO" id="GO:0016607">
    <property type="term" value="C:nuclear speck"/>
    <property type="evidence" value="ECO:0000314"/>
    <property type="project" value="HPA"/>
</dbReference>
<dbReference type="GO" id="GO:0005634">
    <property type="term" value="C:nucleus"/>
    <property type="evidence" value="ECO:0000314"/>
    <property type="project" value="HGNC-UCL"/>
</dbReference>
<dbReference type="GO" id="GO:0048306">
    <property type="term" value="F:calcium-dependent protein binding"/>
    <property type="evidence" value="ECO:0000353"/>
    <property type="project" value="HGNC-UCL"/>
</dbReference>
<dbReference type="InterPro" id="IPR026097">
    <property type="entry name" value="S100PBP"/>
</dbReference>
<dbReference type="PANTHER" id="PTHR14455">
    <property type="entry name" value="ASKOPOS"/>
    <property type="match status" value="1"/>
</dbReference>
<dbReference type="PANTHER" id="PTHR14455:SF0">
    <property type="entry name" value="S100P-BINDING PROTEIN"/>
    <property type="match status" value="1"/>
</dbReference>
<dbReference type="Pfam" id="PF15427">
    <property type="entry name" value="S100PBPR"/>
    <property type="match status" value="1"/>
</dbReference>
<organism>
    <name type="scientific">Homo sapiens</name>
    <name type="common">Human</name>
    <dbReference type="NCBI Taxonomy" id="9606"/>
    <lineage>
        <taxon>Eukaryota</taxon>
        <taxon>Metazoa</taxon>
        <taxon>Chordata</taxon>
        <taxon>Craniata</taxon>
        <taxon>Vertebrata</taxon>
        <taxon>Euteleostomi</taxon>
        <taxon>Mammalia</taxon>
        <taxon>Eutheria</taxon>
        <taxon>Euarchontoglires</taxon>
        <taxon>Primates</taxon>
        <taxon>Haplorrhini</taxon>
        <taxon>Catarrhini</taxon>
        <taxon>Hominidae</taxon>
        <taxon>Homo</taxon>
    </lineage>
</organism>
<gene>
    <name evidence="10" type="primary">S100PBP</name>
    <name evidence="7" type="synonym">S100PBPR</name>
</gene>
<feature type="chain" id="PRO_0000317051" description="S100P-binding protein">
    <location>
        <begin position="1"/>
        <end position="408"/>
    </location>
</feature>
<feature type="region of interest" description="Disordered" evidence="1">
    <location>
        <begin position="1"/>
        <end position="111"/>
    </location>
</feature>
<feature type="region of interest" description="Disordered" evidence="1">
    <location>
        <begin position="162"/>
        <end position="234"/>
    </location>
</feature>
<feature type="region of interest" description="Disordered" evidence="1">
    <location>
        <begin position="271"/>
        <end position="291"/>
    </location>
</feature>
<feature type="compositionally biased region" description="Acidic residues" evidence="1">
    <location>
        <begin position="28"/>
        <end position="59"/>
    </location>
</feature>
<feature type="compositionally biased region" description="Basic and acidic residues" evidence="1">
    <location>
        <begin position="77"/>
        <end position="86"/>
    </location>
</feature>
<feature type="compositionally biased region" description="Basic and acidic residues" evidence="1">
    <location>
        <begin position="162"/>
        <end position="185"/>
    </location>
</feature>
<feature type="compositionally biased region" description="Polar residues" evidence="1">
    <location>
        <begin position="188"/>
        <end position="234"/>
    </location>
</feature>
<feature type="compositionally biased region" description="Basic and acidic residues" evidence="1">
    <location>
        <begin position="280"/>
        <end position="291"/>
    </location>
</feature>
<feature type="modified residue" description="Phosphoserine" evidence="13">
    <location>
        <position position="187"/>
    </location>
</feature>
<feature type="splice variant" id="VSP_052661" description="In isoform 2." evidence="6 8">
    <location>
        <begin position="343"/>
        <end position="408"/>
    </location>
</feature>
<feature type="sequence conflict" description="In Ref. 1; BAB14335." evidence="9" ref="1">
    <original>V</original>
    <variation>L</variation>
    <location>
        <position position="329"/>
    </location>
</feature>
<keyword id="KW-0025">Alternative splicing</keyword>
<keyword id="KW-0539">Nucleus</keyword>
<keyword id="KW-0597">Phosphoprotein</keyword>
<keyword id="KW-1267">Proteomics identification</keyword>
<keyword id="KW-1185">Reference proteome</keyword>
<sequence length="408" mass="45582">MMCSRVPSEQSSGTSLLPKDGAPFSWDSLDEDGLDDSLLELSEGEEDDGDVNYTEEEIDALLKEDDPSYEQSSGEDDGGHVEKGERGSQILLDTPREKNSSYSLGPVAETPDLFKLPQLSTSSGHGPAHTKPLNRRSVLEKNLIKVTVAPFNPTVCDALLDKDETDSSKDTEKLSSLGEEMREDGLSPNESKLCTESEGISPNNSAWNGPQLSSSNNNFQQTVSDKNMPDSENPTSVFSRISDHSETPNMELSCRNGGSHKSSCEMRSLVVSTSSNKQDVLNKDSGKMKGHERRLGKVIPVLQTKTRTNVPTFSQSNLEQQKQLYLRSVIAHIEDPEDTNQGISGELCALMDQVHHMQHSKWQHPSDLTTRNYARRQKHLQRYSLTQWVDRNMRSHHRFQRLPDFSYS</sequence>
<name>S1PBP_HUMAN</name>
<proteinExistence type="evidence at protein level"/>